<protein>
    <recommendedName>
        <fullName evidence="1">Holliday junction branch migration complex subunit RuvA</fullName>
    </recommendedName>
</protein>
<feature type="chain" id="PRO_1000002395" description="Holliday junction branch migration complex subunit RuvA">
    <location>
        <begin position="1"/>
        <end position="199"/>
    </location>
</feature>
<feature type="region of interest" description="Domain I" evidence="1">
    <location>
        <begin position="1"/>
        <end position="64"/>
    </location>
</feature>
<feature type="region of interest" description="Domain II" evidence="1">
    <location>
        <begin position="65"/>
        <end position="143"/>
    </location>
</feature>
<feature type="region of interest" description="Flexible linker" evidence="1">
    <location>
        <begin position="144"/>
        <end position="154"/>
    </location>
</feature>
<feature type="region of interest" description="Domain III" evidence="1">
    <location>
        <begin position="154"/>
        <end position="199"/>
    </location>
</feature>
<dbReference type="EMBL" id="AM406670">
    <property type="protein sequence ID" value="CAL93219.1"/>
    <property type="molecule type" value="Genomic_DNA"/>
</dbReference>
<dbReference type="RefSeq" id="WP_011764337.1">
    <property type="nucleotide sequence ID" value="NC_008702.1"/>
</dbReference>
<dbReference type="SMR" id="A1K314"/>
<dbReference type="STRING" id="62928.azo0602"/>
<dbReference type="KEGG" id="azo:azo0602"/>
<dbReference type="eggNOG" id="COG0632">
    <property type="taxonomic scope" value="Bacteria"/>
</dbReference>
<dbReference type="HOGENOM" id="CLU_087936_0_0_4"/>
<dbReference type="Proteomes" id="UP000002588">
    <property type="component" value="Chromosome"/>
</dbReference>
<dbReference type="GO" id="GO:0005737">
    <property type="term" value="C:cytoplasm"/>
    <property type="evidence" value="ECO:0007669"/>
    <property type="project" value="UniProtKB-SubCell"/>
</dbReference>
<dbReference type="GO" id="GO:0009379">
    <property type="term" value="C:Holliday junction helicase complex"/>
    <property type="evidence" value="ECO:0007669"/>
    <property type="project" value="InterPro"/>
</dbReference>
<dbReference type="GO" id="GO:0048476">
    <property type="term" value="C:Holliday junction resolvase complex"/>
    <property type="evidence" value="ECO:0007669"/>
    <property type="project" value="UniProtKB-UniRule"/>
</dbReference>
<dbReference type="GO" id="GO:0005524">
    <property type="term" value="F:ATP binding"/>
    <property type="evidence" value="ECO:0007669"/>
    <property type="project" value="InterPro"/>
</dbReference>
<dbReference type="GO" id="GO:0000400">
    <property type="term" value="F:four-way junction DNA binding"/>
    <property type="evidence" value="ECO:0007669"/>
    <property type="project" value="UniProtKB-UniRule"/>
</dbReference>
<dbReference type="GO" id="GO:0009378">
    <property type="term" value="F:four-way junction helicase activity"/>
    <property type="evidence" value="ECO:0007669"/>
    <property type="project" value="InterPro"/>
</dbReference>
<dbReference type="GO" id="GO:0006310">
    <property type="term" value="P:DNA recombination"/>
    <property type="evidence" value="ECO:0007669"/>
    <property type="project" value="UniProtKB-UniRule"/>
</dbReference>
<dbReference type="GO" id="GO:0006281">
    <property type="term" value="P:DNA repair"/>
    <property type="evidence" value="ECO:0007669"/>
    <property type="project" value="UniProtKB-UniRule"/>
</dbReference>
<dbReference type="CDD" id="cd14332">
    <property type="entry name" value="UBA_RuvA_C"/>
    <property type="match status" value="1"/>
</dbReference>
<dbReference type="Gene3D" id="1.10.150.20">
    <property type="entry name" value="5' to 3' exonuclease, C-terminal subdomain"/>
    <property type="match status" value="1"/>
</dbReference>
<dbReference type="Gene3D" id="1.10.8.10">
    <property type="entry name" value="DNA helicase RuvA subunit, C-terminal domain"/>
    <property type="match status" value="1"/>
</dbReference>
<dbReference type="Gene3D" id="2.40.50.140">
    <property type="entry name" value="Nucleic acid-binding proteins"/>
    <property type="match status" value="1"/>
</dbReference>
<dbReference type="HAMAP" id="MF_00031">
    <property type="entry name" value="DNA_HJ_migration_RuvA"/>
    <property type="match status" value="1"/>
</dbReference>
<dbReference type="InterPro" id="IPR013849">
    <property type="entry name" value="DNA_helicase_Holl-junc_RuvA_I"/>
</dbReference>
<dbReference type="InterPro" id="IPR003583">
    <property type="entry name" value="Hlx-hairpin-Hlx_DNA-bd_motif"/>
</dbReference>
<dbReference type="InterPro" id="IPR012340">
    <property type="entry name" value="NA-bd_OB-fold"/>
</dbReference>
<dbReference type="InterPro" id="IPR000085">
    <property type="entry name" value="RuvA"/>
</dbReference>
<dbReference type="InterPro" id="IPR010994">
    <property type="entry name" value="RuvA_2-like"/>
</dbReference>
<dbReference type="InterPro" id="IPR011114">
    <property type="entry name" value="RuvA_C"/>
</dbReference>
<dbReference type="InterPro" id="IPR036267">
    <property type="entry name" value="RuvA_C_sf"/>
</dbReference>
<dbReference type="NCBIfam" id="TIGR00084">
    <property type="entry name" value="ruvA"/>
    <property type="match status" value="1"/>
</dbReference>
<dbReference type="Pfam" id="PF14520">
    <property type="entry name" value="HHH_5"/>
    <property type="match status" value="1"/>
</dbReference>
<dbReference type="Pfam" id="PF07499">
    <property type="entry name" value="RuvA_C"/>
    <property type="match status" value="1"/>
</dbReference>
<dbReference type="Pfam" id="PF01330">
    <property type="entry name" value="RuvA_N"/>
    <property type="match status" value="1"/>
</dbReference>
<dbReference type="SMART" id="SM00278">
    <property type="entry name" value="HhH1"/>
    <property type="match status" value="2"/>
</dbReference>
<dbReference type="SUPFAM" id="SSF46929">
    <property type="entry name" value="DNA helicase RuvA subunit, C-terminal domain"/>
    <property type="match status" value="1"/>
</dbReference>
<dbReference type="SUPFAM" id="SSF50249">
    <property type="entry name" value="Nucleic acid-binding proteins"/>
    <property type="match status" value="1"/>
</dbReference>
<dbReference type="SUPFAM" id="SSF47781">
    <property type="entry name" value="RuvA domain 2-like"/>
    <property type="match status" value="1"/>
</dbReference>
<name>RUVA_AZOSB</name>
<sequence length="199" mass="20831">MIGRISGLLLEKNPPQILVDAHGVGYELEVPMSTFYGLPATGTQVSLHTHLAIREDGHFLYGFATDEERTAFRQLLKVSGIGARTALAVLSGLSVSDLAQAVALQEAGRLVKIPGIGKKTAERLLLELRDKLGKALPQVAGARLAAVAGGAPDAKSDILNALLALGYNEKEALGAMKGLAEDTGVSDGIRQALKLLSKA</sequence>
<accession>A1K314</accession>
<evidence type="ECO:0000255" key="1">
    <source>
        <dbReference type="HAMAP-Rule" id="MF_00031"/>
    </source>
</evidence>
<organism>
    <name type="scientific">Azoarcus sp. (strain BH72)</name>
    <dbReference type="NCBI Taxonomy" id="418699"/>
    <lineage>
        <taxon>Bacteria</taxon>
        <taxon>Pseudomonadati</taxon>
        <taxon>Pseudomonadota</taxon>
        <taxon>Betaproteobacteria</taxon>
        <taxon>Rhodocyclales</taxon>
        <taxon>Zoogloeaceae</taxon>
        <taxon>Azoarcus</taxon>
    </lineage>
</organism>
<proteinExistence type="inferred from homology"/>
<gene>
    <name evidence="1" type="primary">ruvA</name>
    <name type="ordered locus">azo0602</name>
</gene>
<keyword id="KW-0963">Cytoplasm</keyword>
<keyword id="KW-0227">DNA damage</keyword>
<keyword id="KW-0233">DNA recombination</keyword>
<keyword id="KW-0234">DNA repair</keyword>
<keyword id="KW-0238">DNA-binding</keyword>
<keyword id="KW-1185">Reference proteome</keyword>
<reference key="1">
    <citation type="journal article" date="2006" name="Nat. Biotechnol.">
        <title>Complete genome of the mutualistic, N2-fixing grass endophyte Azoarcus sp. strain BH72.</title>
        <authorList>
            <person name="Krause A."/>
            <person name="Ramakumar A."/>
            <person name="Bartels D."/>
            <person name="Battistoni F."/>
            <person name="Bekel T."/>
            <person name="Boch J."/>
            <person name="Boehm M."/>
            <person name="Friedrich F."/>
            <person name="Hurek T."/>
            <person name="Krause L."/>
            <person name="Linke B."/>
            <person name="McHardy A.C."/>
            <person name="Sarkar A."/>
            <person name="Schneiker S."/>
            <person name="Syed A.A."/>
            <person name="Thauer R."/>
            <person name="Vorhoelter F.-J."/>
            <person name="Weidner S."/>
            <person name="Puehler A."/>
            <person name="Reinhold-Hurek B."/>
            <person name="Kaiser O."/>
            <person name="Goesmann A."/>
        </authorList>
    </citation>
    <scope>NUCLEOTIDE SEQUENCE [LARGE SCALE GENOMIC DNA]</scope>
    <source>
        <strain>BH72</strain>
    </source>
</reference>
<comment type="function">
    <text evidence="1">The RuvA-RuvB-RuvC complex processes Holliday junction (HJ) DNA during genetic recombination and DNA repair, while the RuvA-RuvB complex plays an important role in the rescue of blocked DNA replication forks via replication fork reversal (RFR). RuvA specifically binds to HJ cruciform DNA, conferring on it an open structure. The RuvB hexamer acts as an ATP-dependent pump, pulling dsDNA into and through the RuvAB complex. HJ branch migration allows RuvC to scan DNA until it finds its consensus sequence, where it cleaves and resolves the cruciform DNA.</text>
</comment>
<comment type="subunit">
    <text evidence="1">Homotetramer. Forms an RuvA(8)-RuvB(12)-Holliday junction (HJ) complex. HJ DNA is sandwiched between 2 RuvA tetramers; dsDNA enters through RuvA and exits via RuvB. An RuvB hexamer assembles on each DNA strand where it exits the tetramer. Each RuvB hexamer is contacted by two RuvA subunits (via domain III) on 2 adjacent RuvB subunits; this complex drives branch migration. In the full resolvosome a probable DNA-RuvA(4)-RuvB(12)-RuvC(2) complex forms which resolves the HJ.</text>
</comment>
<comment type="subcellular location">
    <subcellularLocation>
        <location evidence="1">Cytoplasm</location>
    </subcellularLocation>
</comment>
<comment type="domain">
    <text evidence="1">Has three domains with a flexible linker between the domains II and III and assumes an 'L' shape. Domain III is highly mobile and contacts RuvB.</text>
</comment>
<comment type="similarity">
    <text evidence="1">Belongs to the RuvA family.</text>
</comment>